<gene>
    <name type="primary">ODAM</name>
    <name type="synonym">APIN</name>
</gene>
<name>ODAM_MACMU</name>
<feature type="signal peptide" evidence="4">
    <location>
        <begin position="1"/>
        <end position="15"/>
    </location>
</feature>
<feature type="chain" id="PRO_5000214104" description="Odontogenic ameloblast-associated protein">
    <location>
        <begin position="16"/>
        <end position="279"/>
    </location>
</feature>
<feature type="region of interest" description="Disordered" evidence="5">
    <location>
        <begin position="100"/>
        <end position="125"/>
    </location>
</feature>
<feature type="region of interest" description="Interaction with ARHGEF5" evidence="2">
    <location>
        <begin position="127"/>
        <end position="129"/>
    </location>
</feature>
<feature type="compositionally biased region" description="Low complexity" evidence="5">
    <location>
        <begin position="100"/>
        <end position="123"/>
    </location>
</feature>
<feature type="glycosylation site" description="O-linked (GalNAc...) threonine" evidence="4">
    <location>
        <position position="115"/>
    </location>
</feature>
<feature type="glycosylation site" description="O-linked (GalNAc...) threonine" evidence="4">
    <location>
        <position position="119"/>
    </location>
</feature>
<feature type="glycosylation site" description="O-linked (GalNAc...) threonine" evidence="4">
    <location>
        <position position="168"/>
    </location>
</feature>
<feature type="glycosylation site" description="O-linked (GalNAc...) threonine" evidence="4">
    <location>
        <position position="244"/>
    </location>
</feature>
<feature type="glycosylation site" description="O-linked (GalNAc...) threonine" evidence="4">
    <location>
        <position position="250"/>
    </location>
</feature>
<feature type="glycosylation site" description="O-linked (GalNAc...) threonine" evidence="4">
    <location>
        <position position="251"/>
    </location>
</feature>
<feature type="glycosylation site" description="O-linked (GalNAc...) threonine" evidence="4">
    <location>
        <position position="255"/>
    </location>
</feature>
<feature type="glycosylation site" description="O-linked (GalNAc...) threonine" evidence="4">
    <location>
        <position position="273"/>
    </location>
</feature>
<comment type="function">
    <text evidence="2">Tooth-associated epithelia protein that probably plays a role in odontogenesis, the complex process that results in the initiation and generation of the tooth. May be incorporated in the enamel matrix at the end of mineralization process. Involved in the induction of RHOA activity via interaction with ARHGEF and expression of downstream factors such as ROCK. Plays a role in attachment of the junctional epithelium to the tooth surface.</text>
</comment>
<comment type="subunit">
    <text evidence="2">Interacts (via C-terminus) with ARHGEF5.</text>
</comment>
<comment type="subcellular location">
    <subcellularLocation>
        <location evidence="3">Secreted</location>
    </subcellularLocation>
    <subcellularLocation>
        <location evidence="2">Cytoplasm</location>
    </subcellularLocation>
    <subcellularLocation>
        <location evidence="2">Nucleus</location>
    </subcellularLocation>
</comment>
<comment type="PTM">
    <text evidence="1">O-glycosylated.</text>
</comment>
<comment type="similarity">
    <text evidence="6">Belongs to the ODAM family.</text>
</comment>
<protein>
    <recommendedName>
        <fullName>Odontogenic ameloblast-associated protein</fullName>
    </recommendedName>
    <alternativeName>
        <fullName>Apin</fullName>
    </alternativeName>
</protein>
<organism>
    <name type="scientific">Macaca mulatta</name>
    <name type="common">Rhesus macaque</name>
    <dbReference type="NCBI Taxonomy" id="9544"/>
    <lineage>
        <taxon>Eukaryota</taxon>
        <taxon>Metazoa</taxon>
        <taxon>Chordata</taxon>
        <taxon>Craniata</taxon>
        <taxon>Vertebrata</taxon>
        <taxon>Euteleostomi</taxon>
        <taxon>Mammalia</taxon>
        <taxon>Eutheria</taxon>
        <taxon>Euarchontoglires</taxon>
        <taxon>Primates</taxon>
        <taxon>Haplorrhini</taxon>
        <taxon>Catarrhini</taxon>
        <taxon>Cercopithecidae</taxon>
        <taxon>Cercopithecinae</taxon>
        <taxon>Macaca</taxon>
    </lineage>
</organism>
<keyword id="KW-0091">Biomineralization</keyword>
<keyword id="KW-0963">Cytoplasm</keyword>
<keyword id="KW-0325">Glycoprotein</keyword>
<keyword id="KW-0539">Nucleus</keyword>
<keyword id="KW-1185">Reference proteome</keyword>
<keyword id="KW-0964">Secreted</keyword>
<keyword id="KW-0732">Signal</keyword>
<proteinExistence type="evidence at transcript level"/>
<sequence>MKIIILLGFLGATLSAPLIPQRLMSASNSNELLLNLNNGQLLPLRLQGPLNSWIPPFSGVLQQQQQAQIPGLAQFSLSALDQFAGLFPNQIPFPGQASFAQGAQAGQVDPSQAQTPPQTQPGPNHVMPYVFSFKMPQEQGQMFEYYPVYVLLPWEQPQQTVPRSPPQTRQQQYEEQIPFYDQFGYIPQLAEPAIPGGQQQLAFDPQLGTAPEIAVMSTGEEIPYLQKEVINFRRDSAGVLMPSTSPKPSTTNVFTSAIDRTITAKFPEEKAKTDGLREP</sequence>
<accession>A1YQ92</accession>
<reference key="1">
    <citation type="submission" date="2006-11" db="EMBL/GenBank/DDBJ databases">
        <authorList>
            <person name="Moffatt P."/>
            <person name="Smith C.E."/>
            <person name="Nanci A."/>
        </authorList>
    </citation>
    <scope>NUCLEOTIDE SEQUENCE [MRNA]</scope>
</reference>
<dbReference type="EMBL" id="EF121759">
    <property type="protein sequence ID" value="ABL63509.1"/>
    <property type="molecule type" value="mRNA"/>
</dbReference>
<dbReference type="RefSeq" id="NP_001073604.1">
    <property type="nucleotide sequence ID" value="NM_001080135.1"/>
</dbReference>
<dbReference type="FunCoup" id="A1YQ92">
    <property type="interactions" value="9"/>
</dbReference>
<dbReference type="STRING" id="9544.ENSMMUP00000053531"/>
<dbReference type="GlyCosmos" id="A1YQ92">
    <property type="glycosylation" value="8 sites, No reported glycans"/>
</dbReference>
<dbReference type="PaxDb" id="9544-ENSMMUP00000007918"/>
<dbReference type="Ensembl" id="ENSMMUT00000072769.2">
    <property type="protein sequence ID" value="ENSMMUP00000053531.1"/>
    <property type="gene ID" value="ENSMMUG00000006029.3"/>
</dbReference>
<dbReference type="GeneID" id="707906"/>
<dbReference type="KEGG" id="mcc:707906"/>
<dbReference type="CTD" id="54959"/>
<dbReference type="VEuPathDB" id="HostDB:ENSMMUG00000006029"/>
<dbReference type="eggNOG" id="ENOG502RM1P">
    <property type="taxonomic scope" value="Eukaryota"/>
</dbReference>
<dbReference type="GeneTree" id="ENSGT00390000011100"/>
<dbReference type="HOGENOM" id="CLU_144254_0_0_1"/>
<dbReference type="InParanoid" id="A1YQ92"/>
<dbReference type="OMA" id="PNHVMPY"/>
<dbReference type="OrthoDB" id="9889202at2759"/>
<dbReference type="Proteomes" id="UP000006718">
    <property type="component" value="Chromosome 5"/>
</dbReference>
<dbReference type="Bgee" id="ENSMMUG00000006029">
    <property type="expression patterns" value="Expressed in olfactory segment of nasal mucosa and 1 other cell type or tissue"/>
</dbReference>
<dbReference type="GO" id="GO:0071944">
    <property type="term" value="C:cell periphery"/>
    <property type="evidence" value="ECO:0007669"/>
    <property type="project" value="Ensembl"/>
</dbReference>
<dbReference type="GO" id="GO:0005737">
    <property type="term" value="C:cytoplasm"/>
    <property type="evidence" value="ECO:0000318"/>
    <property type="project" value="GO_Central"/>
</dbReference>
<dbReference type="GO" id="GO:0005829">
    <property type="term" value="C:cytosol"/>
    <property type="evidence" value="ECO:0007669"/>
    <property type="project" value="Ensembl"/>
</dbReference>
<dbReference type="GO" id="GO:0005615">
    <property type="term" value="C:extracellular space"/>
    <property type="evidence" value="ECO:0007669"/>
    <property type="project" value="Ensembl"/>
</dbReference>
<dbReference type="GO" id="GO:0072686">
    <property type="term" value="C:mitotic spindle"/>
    <property type="evidence" value="ECO:0007669"/>
    <property type="project" value="Ensembl"/>
</dbReference>
<dbReference type="GO" id="GO:0005654">
    <property type="term" value="C:nucleoplasm"/>
    <property type="evidence" value="ECO:0007669"/>
    <property type="project" value="Ensembl"/>
</dbReference>
<dbReference type="GO" id="GO:0005634">
    <property type="term" value="C:nucleus"/>
    <property type="evidence" value="ECO:0000318"/>
    <property type="project" value="GO_Central"/>
</dbReference>
<dbReference type="GO" id="GO:0099512">
    <property type="term" value="C:supramolecular fiber"/>
    <property type="evidence" value="ECO:0007669"/>
    <property type="project" value="Ensembl"/>
</dbReference>
<dbReference type="GO" id="GO:0031214">
    <property type="term" value="P:biomineral tissue development"/>
    <property type="evidence" value="ECO:0007669"/>
    <property type="project" value="UniProtKB-KW"/>
</dbReference>
<dbReference type="GO" id="GO:0006954">
    <property type="term" value="P:inflammatory response"/>
    <property type="evidence" value="ECO:0007669"/>
    <property type="project" value="Ensembl"/>
</dbReference>
<dbReference type="GO" id="GO:0042475">
    <property type="term" value="P:odontogenesis of dentin-containing tooth"/>
    <property type="evidence" value="ECO:0000318"/>
    <property type="project" value="GO_Central"/>
</dbReference>
<dbReference type="GO" id="GO:0060054">
    <property type="term" value="P:positive regulation of epithelial cell proliferation involved in wound healing"/>
    <property type="evidence" value="ECO:0007669"/>
    <property type="project" value="Ensembl"/>
</dbReference>
<dbReference type="GO" id="GO:0010628">
    <property type="term" value="P:positive regulation of gene expression"/>
    <property type="evidence" value="ECO:0007669"/>
    <property type="project" value="Ensembl"/>
</dbReference>
<dbReference type="GO" id="GO:0032956">
    <property type="term" value="P:regulation of actin cytoskeleton organization"/>
    <property type="evidence" value="ECO:0007669"/>
    <property type="project" value="Ensembl"/>
</dbReference>
<dbReference type="InterPro" id="IPR026802">
    <property type="entry name" value="Odam"/>
</dbReference>
<dbReference type="PANTHER" id="PTHR16237">
    <property type="entry name" value="ODONTOGENIC AMELOBLAST-ASSOCIATED PROTEIN"/>
    <property type="match status" value="1"/>
</dbReference>
<dbReference type="PANTHER" id="PTHR16237:SF3">
    <property type="entry name" value="ODONTOGENIC AMELOBLAST-ASSOCIATED PROTEIN"/>
    <property type="match status" value="1"/>
</dbReference>
<dbReference type="Pfam" id="PF15424">
    <property type="entry name" value="ODAM"/>
    <property type="match status" value="1"/>
</dbReference>
<evidence type="ECO:0000250" key="1"/>
<evidence type="ECO:0000250" key="2">
    <source>
        <dbReference type="UniProtKB" id="A1E959"/>
    </source>
</evidence>
<evidence type="ECO:0000250" key="3">
    <source>
        <dbReference type="UniProtKB" id="Q3HS83"/>
    </source>
</evidence>
<evidence type="ECO:0000255" key="4"/>
<evidence type="ECO:0000256" key="5">
    <source>
        <dbReference type="SAM" id="MobiDB-lite"/>
    </source>
</evidence>
<evidence type="ECO:0000305" key="6"/>